<dbReference type="EMBL" id="X93358">
    <property type="protein sequence ID" value="CAA63738.1"/>
    <property type="molecule type" value="Genomic_DNA"/>
</dbReference>
<dbReference type="EMBL" id="AL591688">
    <property type="protein sequence ID" value="CAC47492.1"/>
    <property type="molecule type" value="Genomic_DNA"/>
</dbReference>
<dbReference type="RefSeq" id="NP_387019.1">
    <property type="nucleotide sequence ID" value="NC_003047.1"/>
</dbReference>
<dbReference type="RefSeq" id="WP_003528836.1">
    <property type="nucleotide sequence ID" value="NC_003047.1"/>
</dbReference>
<dbReference type="SMR" id="Q52982"/>
<dbReference type="TCDB" id="2.A.63.1.1">
    <property type="family name" value="the monovalent cation (k(+) or na(+)):proton antiporter-3 (cpa3) family"/>
</dbReference>
<dbReference type="EnsemblBacteria" id="CAC47492">
    <property type="protein sequence ID" value="CAC47492"/>
    <property type="gene ID" value="SMc03182"/>
</dbReference>
<dbReference type="KEGG" id="sme:SMc03182"/>
<dbReference type="PATRIC" id="fig|266834.11.peg.4434"/>
<dbReference type="eggNOG" id="COG1863">
    <property type="taxonomic scope" value="Bacteria"/>
</dbReference>
<dbReference type="HOGENOM" id="CLU_086615_4_0_5"/>
<dbReference type="OrthoDB" id="9807187at2"/>
<dbReference type="Proteomes" id="UP000001976">
    <property type="component" value="Chromosome"/>
</dbReference>
<dbReference type="GO" id="GO:0005886">
    <property type="term" value="C:plasma membrane"/>
    <property type="evidence" value="ECO:0007669"/>
    <property type="project" value="UniProtKB-SubCell"/>
</dbReference>
<dbReference type="GO" id="GO:0015297">
    <property type="term" value="F:antiporter activity"/>
    <property type="evidence" value="ECO:0007669"/>
    <property type="project" value="UniProtKB-KW"/>
</dbReference>
<dbReference type="GO" id="GO:0008324">
    <property type="term" value="F:monoatomic cation transmembrane transporter activity"/>
    <property type="evidence" value="ECO:0007669"/>
    <property type="project" value="InterPro"/>
</dbReference>
<dbReference type="GO" id="GO:0006813">
    <property type="term" value="P:potassium ion transport"/>
    <property type="evidence" value="ECO:0007669"/>
    <property type="project" value="UniProtKB-KW"/>
</dbReference>
<dbReference type="GO" id="GO:1902600">
    <property type="term" value="P:proton transmembrane transport"/>
    <property type="evidence" value="ECO:0007669"/>
    <property type="project" value="UniProtKB-KW"/>
</dbReference>
<dbReference type="InterPro" id="IPR004847">
    <property type="entry name" value="Antiport_suE1"/>
</dbReference>
<dbReference type="InterPro" id="IPR002758">
    <property type="entry name" value="Cation_antiport_E"/>
</dbReference>
<dbReference type="NCBIfam" id="TIGR00942">
    <property type="entry name" value="2a6301s05"/>
    <property type="match status" value="1"/>
</dbReference>
<dbReference type="NCBIfam" id="NF006520">
    <property type="entry name" value="PRK08965.1-4"/>
    <property type="match status" value="1"/>
</dbReference>
<dbReference type="PANTHER" id="PTHR34584">
    <property type="entry name" value="NA(+)/H(+) ANTIPORTER SUBUNIT E1"/>
    <property type="match status" value="1"/>
</dbReference>
<dbReference type="PANTHER" id="PTHR34584:SF1">
    <property type="entry name" value="NA(+)_H(+) ANTIPORTER SUBUNIT E1"/>
    <property type="match status" value="1"/>
</dbReference>
<dbReference type="Pfam" id="PF01899">
    <property type="entry name" value="MNHE"/>
    <property type="match status" value="1"/>
</dbReference>
<dbReference type="PIRSF" id="PIRSF019239">
    <property type="entry name" value="MrpE"/>
    <property type="match status" value="1"/>
</dbReference>
<keyword id="KW-0050">Antiport</keyword>
<keyword id="KW-1003">Cell membrane</keyword>
<keyword id="KW-0375">Hydrogen ion transport</keyword>
<keyword id="KW-0406">Ion transport</keyword>
<keyword id="KW-0472">Membrane</keyword>
<keyword id="KW-0630">Potassium</keyword>
<keyword id="KW-0633">Potassium transport</keyword>
<keyword id="KW-1185">Reference proteome</keyword>
<keyword id="KW-0812">Transmembrane</keyword>
<keyword id="KW-1133">Transmembrane helix</keyword>
<keyword id="KW-0813">Transport</keyword>
<name>PHAE_RHIME</name>
<feature type="chain" id="PRO_0000217095" description="Probable K(+)/H(+) antiporter subunit E">
    <location>
        <begin position="1"/>
        <end position="161"/>
    </location>
</feature>
<feature type="transmembrane region" description="Helical" evidence="1">
    <location>
        <begin position="4"/>
        <end position="21"/>
    </location>
</feature>
<feature type="transmembrane region" description="Helical" evidence="1">
    <location>
        <begin position="28"/>
        <end position="50"/>
    </location>
</feature>
<organism>
    <name type="scientific">Rhizobium meliloti (strain 1021)</name>
    <name type="common">Ensifer meliloti</name>
    <name type="synonym">Sinorhizobium meliloti</name>
    <dbReference type="NCBI Taxonomy" id="266834"/>
    <lineage>
        <taxon>Bacteria</taxon>
        <taxon>Pseudomonadati</taxon>
        <taxon>Pseudomonadota</taxon>
        <taxon>Alphaproteobacteria</taxon>
        <taxon>Hyphomicrobiales</taxon>
        <taxon>Rhizobiaceae</taxon>
        <taxon>Sinorhizobium/Ensifer group</taxon>
        <taxon>Sinorhizobium</taxon>
    </lineage>
</organism>
<sequence length="161" mass="18240">MRTWFPYPLLSIALLLMWLLLSQSVTPGSIVLGLVVSTVLAWVTLNLQPARSRLHRWSRIAGFILRVVGDVIRSNIAVTLIILRAGRRPVNAGFMTVSLDLDDENALALLACVVTATPGTAWLEYDRRQKILLFHVLDIENEDLWRKTITRYAADLKEIFE</sequence>
<proteinExistence type="inferred from homology"/>
<reference key="1">
    <citation type="journal article" date="1998" name="Mol. Microbiol.">
        <title>The pha gene cluster of Rhizobium meliloti involved in pH adaptation and symbiosis encodes a novel type of K+ efflux system.</title>
        <authorList>
            <person name="Putnoky P."/>
            <person name="Kereszt A."/>
            <person name="Nakamura T."/>
            <person name="Endre G."/>
            <person name="Grosskopf E."/>
            <person name="Kiss P."/>
            <person name="Kondorosi A."/>
        </authorList>
    </citation>
    <scope>NUCLEOTIDE SEQUENCE [GENOMIC DNA]</scope>
    <source>
        <strain>41</strain>
    </source>
</reference>
<reference key="2">
    <citation type="journal article" date="2001" name="Proc. Natl. Acad. Sci. U.S.A.">
        <title>Analysis of the chromosome sequence of the legume symbiont Sinorhizobium meliloti strain 1021.</title>
        <authorList>
            <person name="Capela D."/>
            <person name="Barloy-Hubler F."/>
            <person name="Gouzy J."/>
            <person name="Bothe G."/>
            <person name="Ampe F."/>
            <person name="Batut J."/>
            <person name="Boistard P."/>
            <person name="Becker A."/>
            <person name="Boutry M."/>
            <person name="Cadieu E."/>
            <person name="Dreano S."/>
            <person name="Gloux S."/>
            <person name="Godrie T."/>
            <person name="Goffeau A."/>
            <person name="Kahn D."/>
            <person name="Kiss E."/>
            <person name="Lelaure V."/>
            <person name="Masuy D."/>
            <person name="Pohl T."/>
            <person name="Portetelle D."/>
            <person name="Puehler A."/>
            <person name="Purnelle B."/>
            <person name="Ramsperger U."/>
            <person name="Renard C."/>
            <person name="Thebault P."/>
            <person name="Vandenbol M."/>
            <person name="Weidner S."/>
            <person name="Galibert F."/>
        </authorList>
    </citation>
    <scope>NUCLEOTIDE SEQUENCE [LARGE SCALE GENOMIC DNA]</scope>
    <source>
        <strain>1021</strain>
    </source>
</reference>
<reference key="3">
    <citation type="journal article" date="2001" name="Science">
        <title>The composite genome of the legume symbiont Sinorhizobium meliloti.</title>
        <authorList>
            <person name="Galibert F."/>
            <person name="Finan T.M."/>
            <person name="Long S.R."/>
            <person name="Puehler A."/>
            <person name="Abola P."/>
            <person name="Ampe F."/>
            <person name="Barloy-Hubler F."/>
            <person name="Barnett M.J."/>
            <person name="Becker A."/>
            <person name="Boistard P."/>
            <person name="Bothe G."/>
            <person name="Boutry M."/>
            <person name="Bowser L."/>
            <person name="Buhrmester J."/>
            <person name="Cadieu E."/>
            <person name="Capela D."/>
            <person name="Chain P."/>
            <person name="Cowie A."/>
            <person name="Davis R.W."/>
            <person name="Dreano S."/>
            <person name="Federspiel N.A."/>
            <person name="Fisher R.F."/>
            <person name="Gloux S."/>
            <person name="Godrie T."/>
            <person name="Goffeau A."/>
            <person name="Golding B."/>
            <person name="Gouzy J."/>
            <person name="Gurjal M."/>
            <person name="Hernandez-Lucas I."/>
            <person name="Hong A."/>
            <person name="Huizar L."/>
            <person name="Hyman R.W."/>
            <person name="Jones T."/>
            <person name="Kahn D."/>
            <person name="Kahn M.L."/>
            <person name="Kalman S."/>
            <person name="Keating D.H."/>
            <person name="Kiss E."/>
            <person name="Komp C."/>
            <person name="Lelaure V."/>
            <person name="Masuy D."/>
            <person name="Palm C."/>
            <person name="Peck M.C."/>
            <person name="Pohl T.M."/>
            <person name="Portetelle D."/>
            <person name="Purnelle B."/>
            <person name="Ramsperger U."/>
            <person name="Surzycki R."/>
            <person name="Thebault P."/>
            <person name="Vandenbol M."/>
            <person name="Vorhoelter F.J."/>
            <person name="Weidner S."/>
            <person name="Wells D.H."/>
            <person name="Wong K."/>
            <person name="Yeh K.-C."/>
            <person name="Batut J."/>
        </authorList>
    </citation>
    <scope>NUCLEOTIDE SEQUENCE [LARGE SCALE GENOMIC DNA]</scope>
    <source>
        <strain>1021</strain>
    </source>
</reference>
<accession>Q52982</accession>
<protein>
    <recommendedName>
        <fullName>Probable K(+)/H(+) antiporter subunit E</fullName>
    </recommendedName>
    <alternativeName>
        <fullName>pH adaptation potassium efflux system protein E</fullName>
        <shortName>Pha system subunit E</shortName>
    </alternativeName>
</protein>
<comment type="function">
    <text>Part of a K(+) efflux system which is required for the adaptation of R.meliloti to alkaline pH as well as for the infection process during symbiotic nodule development.</text>
</comment>
<comment type="subunit">
    <text>May form a hetero-oligomeric complex that consists of six subunits: PhaAB, PhaC, PhaD, PhaE, PhaF and PhaG.</text>
</comment>
<comment type="subcellular location">
    <subcellularLocation>
        <location evidence="2">Cell membrane</location>
        <topology evidence="2">Multi-pass membrane protein</topology>
    </subcellularLocation>
</comment>
<comment type="similarity">
    <text evidence="2">Belongs to the CPA3 antiporters (TC 2.A.63) subunit E family.</text>
</comment>
<gene>
    <name type="primary">phaE</name>
    <name type="synonym">phaE1</name>
    <name type="ordered locus">R02913</name>
    <name type="ORF">SMc03182</name>
</gene>
<evidence type="ECO:0000255" key="1"/>
<evidence type="ECO:0000305" key="2"/>